<gene>
    <name type="primary">spvC</name>
    <name type="synonym">mkfA</name>
</gene>
<organism>
    <name type="scientific">Salmonella typhimurium</name>
    <dbReference type="NCBI Taxonomy" id="90371"/>
    <lineage>
        <taxon>Bacteria</taxon>
        <taxon>Pseudomonadati</taxon>
        <taxon>Pseudomonadota</taxon>
        <taxon>Gammaproteobacteria</taxon>
        <taxon>Enterobacterales</taxon>
        <taxon>Enterobacteriaceae</taxon>
        <taxon>Salmonella</taxon>
    </lineage>
</organism>
<geneLocation type="plasmid">
    <name>pIP1350</name>
</geneLocation>
<feature type="initiator methionine" description="Removed" evidence="1">
    <location>
        <position position="1"/>
    </location>
</feature>
<feature type="chain" id="PRO_0000221671" description="MAPK phosphothreonine lyase">
    <location>
        <begin position="2"/>
        <end position="241"/>
    </location>
</feature>
<feature type="active site" description="Proton donor" evidence="1">
    <location>
        <position position="106"/>
    </location>
</feature>
<feature type="active site" description="Proton acceptor" evidence="1">
    <location>
        <position position="136"/>
    </location>
</feature>
<proteinExistence type="inferred from homology"/>
<evidence type="ECO:0000250" key="1"/>
<evidence type="ECO:0000305" key="2"/>
<reference key="1">
    <citation type="journal article" date="1989" name="Res. Microbiol.">
        <title>Nucleotide sequence of the plasmid-borne virulence gene mkfA encoding a 28 kDa polypeptide from Salmonella typhimurium.</title>
        <authorList>
            <person name="Norel F."/>
            <person name="Pisano M.R."/>
            <person name="Nicoli J."/>
            <person name="Popoff M.Y."/>
        </authorList>
    </citation>
    <scope>NUCLEOTIDE SEQUENCE [GENOMIC DNA]</scope>
    <source>
        <strain>C5</strain>
    </source>
</reference>
<protein>
    <recommendedName>
        <fullName>MAPK phosphothreonine lyase</fullName>
        <ecNumber>4.2.3.-</ecNumber>
    </recommendedName>
    <alternativeName>
        <fullName>28 kDa virulence-associated polypeptide</fullName>
    </alternativeName>
    <alternativeName>
        <fullName>Mouse killing factor</fullName>
    </alternativeName>
    <alternativeName>
        <fullName>Secreted effector protein SpvC</fullName>
    </alternativeName>
    <alternativeName>
        <fullName>Virulence protein MkfA</fullName>
    </alternativeName>
</protein>
<sequence>MPINRPNLNLNIPPLNIVAAYDGAEIPSTNKHLKNNFNSLHNQMRKMPVSHFKEALDVPDYSGMRQSGFFAMSQGFQLNNHGYDVFIHARRESPQSQGKFAGDKFHISVLRDMVPQAFQALSGLLFSEDSPVDKWKVTDMEKVVQQARVSLGAQFTLYIKPDQENSQYSASFLHKTRQFIECLESRLSENGVISGQCPESDVHPENWKYLSYRNELRSGRDGGEMQRQALREEPFYRLMTE</sequence>
<dbReference type="EC" id="4.2.3.-"/>
<dbReference type="EMBL" id="X16098">
    <property type="protein sequence ID" value="CAA34225.1"/>
    <property type="molecule type" value="Genomic_DNA"/>
</dbReference>
<dbReference type="PIR" id="A43984">
    <property type="entry name" value="A43984"/>
</dbReference>
<dbReference type="RefSeq" id="WP_001122242.1">
    <property type="nucleotide sequence ID" value="NZ_WXYU01000026.1"/>
</dbReference>
<dbReference type="RefSeq" id="YP_003264391.1">
    <property type="nucleotide sequence ID" value="NC_013437.1"/>
</dbReference>
<dbReference type="RefSeq" id="YP_003864188.1">
    <property type="nucleotide sequence ID" value="NC_014476.2"/>
</dbReference>
<dbReference type="RefSeq" id="YP_006955267.1">
    <property type="nucleotide sequence ID" value="NC_019108.1"/>
</dbReference>
<dbReference type="RefSeq" id="YP_006955407.1">
    <property type="nucleotide sequence ID" value="NC_019109.1"/>
</dbReference>
<dbReference type="RefSeq" id="YP_006955574.1">
    <property type="nucleotide sequence ID" value="NC_019001.1"/>
</dbReference>
<dbReference type="SMR" id="P24398"/>
<dbReference type="OMA" id="MARVDQQ"/>
<dbReference type="GO" id="GO:0005576">
    <property type="term" value="C:extracellular region"/>
    <property type="evidence" value="ECO:0007669"/>
    <property type="project" value="UniProtKB-SubCell"/>
</dbReference>
<dbReference type="GO" id="GO:0016829">
    <property type="term" value="F:lyase activity"/>
    <property type="evidence" value="ECO:0007669"/>
    <property type="project" value="UniProtKB-KW"/>
</dbReference>
<dbReference type="Gene3D" id="3.30.2430.10">
    <property type="entry name" value="phosphothreonine lyase"/>
    <property type="match status" value="1"/>
</dbReference>
<dbReference type="InterPro" id="IPR003519">
    <property type="entry name" value="OspF/SpvC"/>
</dbReference>
<dbReference type="InterPro" id="IPR038498">
    <property type="entry name" value="OspF/SpvC_sf"/>
</dbReference>
<dbReference type="NCBIfam" id="NF011781">
    <property type="entry name" value="PRK15245.1"/>
    <property type="match status" value="1"/>
</dbReference>
<dbReference type="Pfam" id="PF03536">
    <property type="entry name" value="VRP3"/>
    <property type="match status" value="1"/>
</dbReference>
<dbReference type="PRINTS" id="PR01342">
    <property type="entry name" value="SALVRPPROT"/>
</dbReference>
<keyword id="KW-0456">Lyase</keyword>
<keyword id="KW-0614">Plasmid</keyword>
<keyword id="KW-0964">Secreted</keyword>
<keyword id="KW-0843">Virulence</keyword>
<comment type="function">
    <text evidence="1">Secreted effector that irreversibly inactivates host MAP kinases by catalyzing the dephosphorylation of the phosphothreonine residue in the pT-X-pY motif present in MAPKs, via a beta-elimination reaction leading to a dehydrobutyrine residue.</text>
</comment>
<comment type="subcellular location">
    <subcellularLocation>
        <location evidence="1">Secreted</location>
    </subcellularLocation>
</comment>
<comment type="similarity">
    <text evidence="2">Belongs to the phosphothreonine lyase family.</text>
</comment>
<name>SPVC_SALTM</name>
<accession>P24398</accession>